<reference key="1">
    <citation type="journal article" date="2007" name="Proc. Natl. Acad. Sci. U.S.A.">
        <title>Gene family encoding the major toxins of lethal Amanita mushrooms.</title>
        <authorList>
            <person name="Hallen H.E."/>
            <person name="Luo H."/>
            <person name="Scott-Craig J.S."/>
            <person name="Walton J.D."/>
        </authorList>
    </citation>
    <scope>NUCLEOTIDE SEQUENCE [GENOMIC DNA]</scope>
    <scope>FUNCTION</scope>
</reference>
<feature type="propeptide" id="PRO_0000443656" evidence="4">
    <location>
        <begin position="1"/>
        <end position="10"/>
    </location>
</feature>
<feature type="peptide" id="PRO_0000443657" description="Toxin MSD8" evidence="4">
    <location>
        <begin position="11"/>
        <end position="18"/>
    </location>
</feature>
<feature type="propeptide" id="PRO_0000443658" evidence="4">
    <location>
        <begin position="19"/>
        <end position="31"/>
    </location>
</feature>
<feature type="cross-link" description="Cyclopeptide (Cys-Pro)" evidence="4">
    <location>
        <begin position="11"/>
        <end position="18"/>
    </location>
</feature>
<feature type="non-terminal residue" evidence="3">
    <location>
        <position position="31"/>
    </location>
</feature>
<protein>
    <recommendedName>
        <fullName evidence="2">MSDIN-like toxin proprotein 8</fullName>
    </recommendedName>
    <component>
        <recommendedName>
            <fullName evidence="2">Toxin MSD8</fullName>
        </recommendedName>
    </component>
</protein>
<gene>
    <name evidence="2" type="primary">MSD8</name>
</gene>
<sequence length="31" mass="3328">MSDINTARLPCIGFLGIPSVGDDIEMVLRHG</sequence>
<evidence type="ECO:0000250" key="1">
    <source>
        <dbReference type="UniProtKB" id="A0A067SLB9"/>
    </source>
</evidence>
<evidence type="ECO:0000303" key="2">
    <source>
    </source>
</evidence>
<evidence type="ECO:0000305" key="3"/>
<evidence type="ECO:0000305" key="4">
    <source>
    </source>
</evidence>
<dbReference type="EMBL" id="EU196151">
    <property type="protein sequence ID" value="ABW87780.2"/>
    <property type="molecule type" value="Genomic_DNA"/>
</dbReference>
<dbReference type="GO" id="GO:0090729">
    <property type="term" value="F:toxin activity"/>
    <property type="evidence" value="ECO:0007669"/>
    <property type="project" value="UniProtKB-KW"/>
</dbReference>
<dbReference type="InterPro" id="IPR027582">
    <property type="entry name" value="Amanitin/phalloidin"/>
</dbReference>
<dbReference type="NCBIfam" id="TIGR04309">
    <property type="entry name" value="amanitin"/>
    <property type="match status" value="1"/>
</dbReference>
<name>MSD8_AMABI</name>
<accession>A8W7N6</accession>
<organism>
    <name type="scientific">Amanita bisporigera</name>
    <name type="common">Destroying angel</name>
    <dbReference type="NCBI Taxonomy" id="87325"/>
    <lineage>
        <taxon>Eukaryota</taxon>
        <taxon>Fungi</taxon>
        <taxon>Dikarya</taxon>
        <taxon>Basidiomycota</taxon>
        <taxon>Agaricomycotina</taxon>
        <taxon>Agaricomycetes</taxon>
        <taxon>Agaricomycetidae</taxon>
        <taxon>Agaricales</taxon>
        <taxon>Pluteineae</taxon>
        <taxon>Amanitaceae</taxon>
        <taxon>Amanita</taxon>
    </lineage>
</organism>
<comment type="function">
    <text evidence="4">Probable toxin that belongs to the MSDIN-like toxin family responsible for a large number of food poisoning cases and deaths (PubMed:18025465).</text>
</comment>
<comment type="PTM">
    <text evidence="1 4">Processed by the macrocyclase-peptidase enzyme POPB to yield a toxic cyclic octapeptide (PubMed:18025465). POPB first removes 10 residues from the N-terminus (By similarity). Conformational trapping of the remaining peptide forces the enzyme to release this intermediate rather than proceed to macrocyclization (By similarity). The enzyme rebinds the remaining peptide in a different conformation and catalyzes macrocyclization of the N-terminal 8 residues (By similarity).</text>
</comment>
<comment type="similarity">
    <text evidence="3">Belongs to the MSDIN fungal toxin family.</text>
</comment>
<proteinExistence type="inferred from homology"/>
<keyword id="KW-0800">Toxin</keyword>